<protein>
    <recommendedName>
        <fullName evidence="1">Peptide chain release factor 3</fullName>
        <shortName evidence="1">RF-3</shortName>
    </recommendedName>
</protein>
<gene>
    <name evidence="1" type="primary">prfC</name>
    <name type="ordered locus">LACR_0395</name>
</gene>
<reference key="1">
    <citation type="journal article" date="2006" name="Proc. Natl. Acad. Sci. U.S.A.">
        <title>Comparative genomics of the lactic acid bacteria.</title>
        <authorList>
            <person name="Makarova K.S."/>
            <person name="Slesarev A."/>
            <person name="Wolf Y.I."/>
            <person name="Sorokin A."/>
            <person name="Mirkin B."/>
            <person name="Koonin E.V."/>
            <person name="Pavlov A."/>
            <person name="Pavlova N."/>
            <person name="Karamychev V."/>
            <person name="Polouchine N."/>
            <person name="Shakhova V."/>
            <person name="Grigoriev I."/>
            <person name="Lou Y."/>
            <person name="Rohksar D."/>
            <person name="Lucas S."/>
            <person name="Huang K."/>
            <person name="Goodstein D.M."/>
            <person name="Hawkins T."/>
            <person name="Plengvidhya V."/>
            <person name="Welker D."/>
            <person name="Hughes J."/>
            <person name="Goh Y."/>
            <person name="Benson A."/>
            <person name="Baldwin K."/>
            <person name="Lee J.-H."/>
            <person name="Diaz-Muniz I."/>
            <person name="Dosti B."/>
            <person name="Smeianov V."/>
            <person name="Wechter W."/>
            <person name="Barabote R."/>
            <person name="Lorca G."/>
            <person name="Altermann E."/>
            <person name="Barrangou R."/>
            <person name="Ganesan B."/>
            <person name="Xie Y."/>
            <person name="Rawsthorne H."/>
            <person name="Tamir D."/>
            <person name="Parker C."/>
            <person name="Breidt F."/>
            <person name="Broadbent J.R."/>
            <person name="Hutkins R."/>
            <person name="O'Sullivan D."/>
            <person name="Steele J."/>
            <person name="Unlu G."/>
            <person name="Saier M.H. Jr."/>
            <person name="Klaenhammer T."/>
            <person name="Richardson P."/>
            <person name="Kozyavkin S."/>
            <person name="Weimer B.C."/>
            <person name="Mills D.A."/>
        </authorList>
    </citation>
    <scope>NUCLEOTIDE SEQUENCE [LARGE SCALE GENOMIC DNA]</scope>
    <source>
        <strain>SK11</strain>
    </source>
</reference>
<evidence type="ECO:0000255" key="1">
    <source>
        <dbReference type="HAMAP-Rule" id="MF_00072"/>
    </source>
</evidence>
<organism>
    <name type="scientific">Lactococcus lactis subsp. cremoris (strain SK11)</name>
    <dbReference type="NCBI Taxonomy" id="272622"/>
    <lineage>
        <taxon>Bacteria</taxon>
        <taxon>Bacillati</taxon>
        <taxon>Bacillota</taxon>
        <taxon>Bacilli</taxon>
        <taxon>Lactobacillales</taxon>
        <taxon>Streptococcaceae</taxon>
        <taxon>Lactococcus</taxon>
        <taxon>Lactococcus cremoris subsp. cremoris</taxon>
    </lineage>
</organism>
<keyword id="KW-0963">Cytoplasm</keyword>
<keyword id="KW-0342">GTP-binding</keyword>
<keyword id="KW-0547">Nucleotide-binding</keyword>
<keyword id="KW-0648">Protein biosynthesis</keyword>
<feature type="chain" id="PRO_1000023657" description="Peptide chain release factor 3">
    <location>
        <begin position="1"/>
        <end position="523"/>
    </location>
</feature>
<feature type="domain" description="tr-type G">
    <location>
        <begin position="8"/>
        <end position="275"/>
    </location>
</feature>
<feature type="binding site" evidence="1">
    <location>
        <begin position="17"/>
        <end position="24"/>
    </location>
    <ligand>
        <name>GTP</name>
        <dbReference type="ChEBI" id="CHEBI:37565"/>
    </ligand>
</feature>
<feature type="binding site" evidence="1">
    <location>
        <begin position="85"/>
        <end position="89"/>
    </location>
    <ligand>
        <name>GTP</name>
        <dbReference type="ChEBI" id="CHEBI:37565"/>
    </ligand>
</feature>
<feature type="binding site" evidence="1">
    <location>
        <begin position="139"/>
        <end position="142"/>
    </location>
    <ligand>
        <name>GTP</name>
        <dbReference type="ChEBI" id="CHEBI:37565"/>
    </ligand>
</feature>
<accession>Q031X0</accession>
<dbReference type="EMBL" id="CP000425">
    <property type="protein sequence ID" value="ABJ72002.1"/>
    <property type="molecule type" value="Genomic_DNA"/>
</dbReference>
<dbReference type="RefSeq" id="WP_011675408.1">
    <property type="nucleotide sequence ID" value="NC_008527.1"/>
</dbReference>
<dbReference type="SMR" id="Q031X0"/>
<dbReference type="KEGG" id="llc:LACR_0395"/>
<dbReference type="HOGENOM" id="CLU_002794_2_1_9"/>
<dbReference type="Proteomes" id="UP000000240">
    <property type="component" value="Chromosome"/>
</dbReference>
<dbReference type="GO" id="GO:0005829">
    <property type="term" value="C:cytosol"/>
    <property type="evidence" value="ECO:0007669"/>
    <property type="project" value="TreeGrafter"/>
</dbReference>
<dbReference type="GO" id="GO:0005525">
    <property type="term" value="F:GTP binding"/>
    <property type="evidence" value="ECO:0007669"/>
    <property type="project" value="UniProtKB-UniRule"/>
</dbReference>
<dbReference type="GO" id="GO:0003924">
    <property type="term" value="F:GTPase activity"/>
    <property type="evidence" value="ECO:0007669"/>
    <property type="project" value="InterPro"/>
</dbReference>
<dbReference type="GO" id="GO:0016150">
    <property type="term" value="F:translation release factor activity, codon nonspecific"/>
    <property type="evidence" value="ECO:0007669"/>
    <property type="project" value="TreeGrafter"/>
</dbReference>
<dbReference type="GO" id="GO:0016149">
    <property type="term" value="F:translation release factor activity, codon specific"/>
    <property type="evidence" value="ECO:0007669"/>
    <property type="project" value="UniProtKB-UniRule"/>
</dbReference>
<dbReference type="GO" id="GO:0006449">
    <property type="term" value="P:regulation of translational termination"/>
    <property type="evidence" value="ECO:0007669"/>
    <property type="project" value="UniProtKB-UniRule"/>
</dbReference>
<dbReference type="CDD" id="cd04169">
    <property type="entry name" value="RF3"/>
    <property type="match status" value="1"/>
</dbReference>
<dbReference type="CDD" id="cd03689">
    <property type="entry name" value="RF3_II"/>
    <property type="match status" value="1"/>
</dbReference>
<dbReference type="FunFam" id="2.40.30.10:FF:000040">
    <property type="entry name" value="Peptide chain release factor 3"/>
    <property type="match status" value="1"/>
</dbReference>
<dbReference type="FunFam" id="3.30.70.3280:FF:000001">
    <property type="entry name" value="Peptide chain release factor 3"/>
    <property type="match status" value="1"/>
</dbReference>
<dbReference type="FunFam" id="3.40.50.300:FF:000542">
    <property type="entry name" value="Peptide chain release factor 3"/>
    <property type="match status" value="1"/>
</dbReference>
<dbReference type="Gene3D" id="3.40.50.300">
    <property type="entry name" value="P-loop containing nucleotide triphosphate hydrolases"/>
    <property type="match status" value="1"/>
</dbReference>
<dbReference type="Gene3D" id="3.30.70.3280">
    <property type="entry name" value="Peptide chain release factor 3, domain III"/>
    <property type="match status" value="1"/>
</dbReference>
<dbReference type="Gene3D" id="2.40.30.10">
    <property type="entry name" value="Translation factors"/>
    <property type="match status" value="1"/>
</dbReference>
<dbReference type="HAMAP" id="MF_00072">
    <property type="entry name" value="Rel_fac_3"/>
    <property type="match status" value="1"/>
</dbReference>
<dbReference type="InterPro" id="IPR053905">
    <property type="entry name" value="EF-G-like_DII"/>
</dbReference>
<dbReference type="InterPro" id="IPR035647">
    <property type="entry name" value="EFG_III/V"/>
</dbReference>
<dbReference type="InterPro" id="IPR031157">
    <property type="entry name" value="G_TR_CS"/>
</dbReference>
<dbReference type="InterPro" id="IPR027417">
    <property type="entry name" value="P-loop_NTPase"/>
</dbReference>
<dbReference type="InterPro" id="IPR004548">
    <property type="entry name" value="PrfC"/>
</dbReference>
<dbReference type="InterPro" id="IPR032090">
    <property type="entry name" value="RF3_C"/>
</dbReference>
<dbReference type="InterPro" id="IPR038467">
    <property type="entry name" value="RF3_dom_3_sf"/>
</dbReference>
<dbReference type="InterPro" id="IPR041732">
    <property type="entry name" value="RF3_GTP-bd"/>
</dbReference>
<dbReference type="InterPro" id="IPR005225">
    <property type="entry name" value="Small_GTP-bd"/>
</dbReference>
<dbReference type="InterPro" id="IPR000795">
    <property type="entry name" value="T_Tr_GTP-bd_dom"/>
</dbReference>
<dbReference type="InterPro" id="IPR009000">
    <property type="entry name" value="Transl_B-barrel_sf"/>
</dbReference>
<dbReference type="NCBIfam" id="TIGR00503">
    <property type="entry name" value="prfC"/>
    <property type="match status" value="1"/>
</dbReference>
<dbReference type="NCBIfam" id="NF001964">
    <property type="entry name" value="PRK00741.1"/>
    <property type="match status" value="1"/>
</dbReference>
<dbReference type="NCBIfam" id="TIGR00231">
    <property type="entry name" value="small_GTP"/>
    <property type="match status" value="1"/>
</dbReference>
<dbReference type="PANTHER" id="PTHR43556">
    <property type="entry name" value="PEPTIDE CHAIN RELEASE FACTOR RF3"/>
    <property type="match status" value="1"/>
</dbReference>
<dbReference type="PANTHER" id="PTHR43556:SF2">
    <property type="entry name" value="PEPTIDE CHAIN RELEASE FACTOR RF3"/>
    <property type="match status" value="1"/>
</dbReference>
<dbReference type="Pfam" id="PF22042">
    <property type="entry name" value="EF-G_D2"/>
    <property type="match status" value="1"/>
</dbReference>
<dbReference type="Pfam" id="PF00009">
    <property type="entry name" value="GTP_EFTU"/>
    <property type="match status" value="1"/>
</dbReference>
<dbReference type="Pfam" id="PF16658">
    <property type="entry name" value="RF3_C"/>
    <property type="match status" value="1"/>
</dbReference>
<dbReference type="PRINTS" id="PR00315">
    <property type="entry name" value="ELONGATNFCT"/>
</dbReference>
<dbReference type="SUPFAM" id="SSF54980">
    <property type="entry name" value="EF-G C-terminal domain-like"/>
    <property type="match status" value="1"/>
</dbReference>
<dbReference type="SUPFAM" id="SSF52540">
    <property type="entry name" value="P-loop containing nucleoside triphosphate hydrolases"/>
    <property type="match status" value="1"/>
</dbReference>
<dbReference type="SUPFAM" id="SSF50447">
    <property type="entry name" value="Translation proteins"/>
    <property type="match status" value="1"/>
</dbReference>
<dbReference type="PROSITE" id="PS00301">
    <property type="entry name" value="G_TR_1"/>
    <property type="match status" value="1"/>
</dbReference>
<dbReference type="PROSITE" id="PS51722">
    <property type="entry name" value="G_TR_2"/>
    <property type="match status" value="1"/>
</dbReference>
<proteinExistence type="inferred from homology"/>
<sequence>MTLQEEIKKRRTFAIISHPDAGKTTITEQLLKFGGAIREAGTVKARKTGNFAKSDWMDIEKERGISVTSSVMQFDYAGKRVNILDTPGHEDFSEDTYRTLMAVDAAVMVIDSAKGIEAQTKKLFQVVKRRGIPVFTFINKLDRDGREPLDLLSELEEILGIASVPMNWPIGMGKNFQGLYDFTHGRVEVYQPEDGKRFVEFDENGEVPTSHPLTKNPFFTQALEDAELLLDAGNQFSEDEVVAGQLTPVFFGSALTSFGVETFLETFLEYAPEPHSHKTVDEEEIEPLNPDFSGFIFKIQANMDPRHRDRIAFVRIVSGEFERGMDVNLVRTGKKVKLSNVTQFMAESRENVENAVAGDIIGVYDTGTYQVGDTLTTGKLKKSFEPLPTFTPELFMRVQAKNVMKQKSFQKGIDQLVQEGAIQLYKSYTTGDIMLGAVGQLQFEVFKDRMEREYNSETIMTPMGSKTVRWIKEEDLDEKMSSSRNILARDRFDHPLFLFENEFAMRWFKDKYPDIELMEQFSV</sequence>
<comment type="function">
    <text evidence="1">Increases the formation of ribosomal termination complexes and stimulates activities of RF-1 and RF-2. It binds guanine nucleotides and has strong preference for UGA stop codons. It may interact directly with the ribosome. The stimulation of RF-1 and RF-2 is significantly reduced by GTP and GDP, but not by GMP.</text>
</comment>
<comment type="subcellular location">
    <subcellularLocation>
        <location evidence="1">Cytoplasm</location>
    </subcellularLocation>
</comment>
<comment type="similarity">
    <text evidence="1">Belongs to the TRAFAC class translation factor GTPase superfamily. Classic translation factor GTPase family. PrfC subfamily.</text>
</comment>
<name>RF3_LACLS</name>